<feature type="signal peptide" evidence="2">
    <location>
        <begin position="1"/>
        <end position="16"/>
    </location>
</feature>
<feature type="propeptide" id="PRO_0000322208" description="Activation peptide" evidence="2">
    <location>
        <begin position="17"/>
        <end position="113"/>
    </location>
</feature>
<feature type="chain" id="PRO_0000050578" description="Viral cathepsin">
    <location>
        <begin position="114"/>
        <end position="324"/>
    </location>
</feature>
<feature type="active site" evidence="1">
    <location>
        <position position="137"/>
    </location>
</feature>
<feature type="active site" evidence="1">
    <location>
        <position position="270"/>
    </location>
</feature>
<feature type="active site" evidence="1">
    <location>
        <position position="290"/>
    </location>
</feature>
<feature type="glycosylation site" description="N-linked (GlcNAc...) asparagine; by host" evidence="2">
    <location>
        <position position="159"/>
    </location>
</feature>
<feature type="disulfide bond" evidence="1">
    <location>
        <begin position="134"/>
        <end position="175"/>
    </location>
</feature>
<feature type="disulfide bond" evidence="1">
    <location>
        <begin position="168"/>
        <end position="208"/>
    </location>
</feature>
<feature type="disulfide bond" evidence="1">
    <location>
        <begin position="263"/>
        <end position="311"/>
    </location>
</feature>
<sequence length="324" mass="36682">MNKIVLYLLVYGAVQCAAYDVLKAPNYFEDFLHKFNKSYSSESEKLRRFQIFRHNLEEIINKNHNDSTAQYEINKFADLSKDETISKYTGLSLPLQTQNFCEVVVLDRPPDKGPLEFDWRRLNKVTSVKNQGMCGACWAFATLGSLESQFAIKHNQFINLSEQQLIDCDFVDAGCDGGLLHTAFEAVMNMGGIQAESDYPYEANNGDCRANAAKFVVKVKKCYRYITVFEEKLKDLLRSVGPIPVAIDASDIVNYKRGIMKYCANHGLNHAVLLVGYAVENGVPFWILKNTWGADWGEQGYFRVQQNINACGIQNELPSSAEIY</sequence>
<comment type="function">
    <text evidence="1">Cysteine protease that plays an essential role in host liquefaction to facilitate horizontal transmission of the virus. May participate in the degradation of foreign protein expressed by the baculovirus system (By similarity).</text>
</comment>
<comment type="catalytic activity">
    <reaction>
        <text>Endopeptidase of broad specificity, hydrolyzing substrates of both cathepsin L and cathepsin B.</text>
        <dbReference type="EC" id="3.4.22.50"/>
    </reaction>
</comment>
<comment type="PTM">
    <text evidence="1">Synthesized as an inactive proenzyme and activated by proteolytic removal of the inhibitory propeptide.</text>
</comment>
<comment type="similarity">
    <text evidence="3 4 5">Belongs to the peptidase C1 family.</text>
</comment>
<accession>P41715</accession>
<accession>O41479</accession>
<evidence type="ECO:0000250" key="1"/>
<evidence type="ECO:0000255" key="2"/>
<evidence type="ECO:0000255" key="3">
    <source>
        <dbReference type="PROSITE-ProRule" id="PRU10088"/>
    </source>
</evidence>
<evidence type="ECO:0000255" key="4">
    <source>
        <dbReference type="PROSITE-ProRule" id="PRU10089"/>
    </source>
</evidence>
<evidence type="ECO:0000255" key="5">
    <source>
        <dbReference type="PROSITE-ProRule" id="PRU10090"/>
    </source>
</evidence>
<organism>
    <name type="scientific">Choristoneura fumiferana nuclear polyhedrosis virus</name>
    <name type="common">CfMNPV</name>
    <dbReference type="NCBI Taxonomy" id="208973"/>
    <lineage>
        <taxon>Viruses</taxon>
        <taxon>Viruses incertae sedis</taxon>
        <taxon>Naldaviricetes</taxon>
        <taxon>Lefavirales</taxon>
        <taxon>Baculoviridae</taxon>
        <taxon>Alphabaculovirus</taxon>
        <taxon>Alphabaculovirus chofumiferanae</taxon>
    </lineage>
</organism>
<name>CATV_NPVCF</name>
<reference key="1">
    <citation type="journal article" date="1995" name="Biochim. Biophys. Acta">
        <title>Identification and characterization of the v-cath gene of the baculovirus, CfMNPV.</title>
        <authorList>
            <person name="Hill J.E."/>
            <person name="Kuzio J."/>
            <person name="Faulkner P."/>
        </authorList>
    </citation>
    <scope>NUCLEOTIDE SEQUENCE [GENOMIC DNA]</scope>
    <source>
        <strain>Ireland</strain>
    </source>
</reference>
<reference key="2">
    <citation type="journal article" date="2005" name="J. Gen. Virol.">
        <title>Analysis of the Choristoneura fumiferana nucleopolyhedrovirus genome.</title>
        <authorList>
            <person name="de Jong J.G."/>
            <person name="Lauzon H.A.M."/>
            <person name="Dominy C."/>
            <person name="Poloumienko A."/>
            <person name="Carstens E.B."/>
            <person name="Arif B.M."/>
            <person name="Krell P.J."/>
        </authorList>
    </citation>
    <scope>NUCLEOTIDE SEQUENCE [GENOMIC DNA]</scope>
    <source>
        <strain>Ireland</strain>
    </source>
</reference>
<proteinExistence type="inferred from homology"/>
<dbReference type="EC" id="3.4.22.50"/>
<dbReference type="EMBL" id="M97906">
    <property type="protein sequence ID" value="AAA96732.1"/>
    <property type="molecule type" value="Genomic_DNA"/>
</dbReference>
<dbReference type="EMBL" id="AF512031">
    <property type="protein sequence ID" value="AAP29900.1"/>
    <property type="molecule type" value="Genomic_DNA"/>
</dbReference>
<dbReference type="PIR" id="S62735">
    <property type="entry name" value="S62735"/>
</dbReference>
<dbReference type="RefSeq" id="NP_848429.1">
    <property type="nucleotide sequence ID" value="NC_004778.3"/>
</dbReference>
<dbReference type="SMR" id="P41715"/>
<dbReference type="MEROPS" id="C01.083"/>
<dbReference type="GlyCosmos" id="P41715">
    <property type="glycosylation" value="1 site, No reported glycans"/>
</dbReference>
<dbReference type="KEGG" id="vg:1482738"/>
<dbReference type="OrthoDB" id="4752at10239"/>
<dbReference type="BRENDA" id="3.4.22.50">
    <property type="organism ID" value="1364"/>
</dbReference>
<dbReference type="Proteomes" id="UP000204418">
    <property type="component" value="Genome"/>
</dbReference>
<dbReference type="GO" id="GO:0008234">
    <property type="term" value="F:cysteine-type peptidase activity"/>
    <property type="evidence" value="ECO:0007669"/>
    <property type="project" value="UniProtKB-KW"/>
</dbReference>
<dbReference type="GO" id="GO:0006508">
    <property type="term" value="P:proteolysis"/>
    <property type="evidence" value="ECO:0007669"/>
    <property type="project" value="UniProtKB-KW"/>
</dbReference>
<dbReference type="CDD" id="cd02248">
    <property type="entry name" value="Peptidase_C1A"/>
    <property type="match status" value="1"/>
</dbReference>
<dbReference type="FunFam" id="3.90.70.10:FF:000103">
    <property type="entry name" value="Hypothetical LOC496748"/>
    <property type="match status" value="1"/>
</dbReference>
<dbReference type="Gene3D" id="3.90.70.10">
    <property type="entry name" value="Cysteine proteinases"/>
    <property type="match status" value="1"/>
</dbReference>
<dbReference type="InterPro" id="IPR038765">
    <property type="entry name" value="Papain-like_cys_pep_sf"/>
</dbReference>
<dbReference type="InterPro" id="IPR025661">
    <property type="entry name" value="Pept_asp_AS"/>
</dbReference>
<dbReference type="InterPro" id="IPR000169">
    <property type="entry name" value="Pept_cys_AS"/>
</dbReference>
<dbReference type="InterPro" id="IPR025660">
    <property type="entry name" value="Pept_his_AS"/>
</dbReference>
<dbReference type="InterPro" id="IPR013128">
    <property type="entry name" value="Peptidase_C1A"/>
</dbReference>
<dbReference type="InterPro" id="IPR000668">
    <property type="entry name" value="Peptidase_C1A_C"/>
</dbReference>
<dbReference type="InterPro" id="IPR039417">
    <property type="entry name" value="Peptidase_C1A_papain-like"/>
</dbReference>
<dbReference type="InterPro" id="IPR013201">
    <property type="entry name" value="Prot_inhib_I29"/>
</dbReference>
<dbReference type="PANTHER" id="PTHR12411">
    <property type="entry name" value="CYSTEINE PROTEASE FAMILY C1-RELATED"/>
    <property type="match status" value="1"/>
</dbReference>
<dbReference type="Pfam" id="PF08246">
    <property type="entry name" value="Inhibitor_I29"/>
    <property type="match status" value="1"/>
</dbReference>
<dbReference type="Pfam" id="PF00112">
    <property type="entry name" value="Peptidase_C1"/>
    <property type="match status" value="1"/>
</dbReference>
<dbReference type="PRINTS" id="PR00705">
    <property type="entry name" value="PAPAIN"/>
</dbReference>
<dbReference type="SMART" id="SM00848">
    <property type="entry name" value="Inhibitor_I29"/>
    <property type="match status" value="1"/>
</dbReference>
<dbReference type="SMART" id="SM00645">
    <property type="entry name" value="Pept_C1"/>
    <property type="match status" value="1"/>
</dbReference>
<dbReference type="SUPFAM" id="SSF54001">
    <property type="entry name" value="Cysteine proteinases"/>
    <property type="match status" value="1"/>
</dbReference>
<dbReference type="PROSITE" id="PS00640">
    <property type="entry name" value="THIOL_PROTEASE_ASN"/>
    <property type="match status" value="1"/>
</dbReference>
<dbReference type="PROSITE" id="PS00139">
    <property type="entry name" value="THIOL_PROTEASE_CYS"/>
    <property type="match status" value="1"/>
</dbReference>
<dbReference type="PROSITE" id="PS00639">
    <property type="entry name" value="THIOL_PROTEASE_HIS"/>
    <property type="match status" value="1"/>
</dbReference>
<gene>
    <name type="primary">Vcath</name>
    <name type="ORF">Ac127</name>
    <name type="ORF">Op125</name>
</gene>
<organismHost>
    <name type="scientific">Choristoneura fumiferana</name>
    <name type="common">Spruce budworm moth</name>
    <name type="synonym">Archips fumiferana</name>
    <dbReference type="NCBI Taxonomy" id="7141"/>
</organismHost>
<keyword id="KW-1015">Disulfide bond</keyword>
<keyword id="KW-0325">Glycoprotein</keyword>
<keyword id="KW-0378">Hydrolase</keyword>
<keyword id="KW-0645">Protease</keyword>
<keyword id="KW-1185">Reference proteome</keyword>
<keyword id="KW-0732">Signal</keyword>
<keyword id="KW-0788">Thiol protease</keyword>
<keyword id="KW-0865">Zymogen</keyword>
<protein>
    <recommendedName>
        <fullName>Viral cathepsin</fullName>
        <shortName>V-cath</shortName>
        <ecNumber>3.4.22.50</ecNumber>
    </recommendedName>
    <alternativeName>
        <fullName>Cysteine proteinase</fullName>
        <shortName>CP</shortName>
    </alternativeName>
</protein>